<accession>F4KDN0</accession>
<accession>Q9FMF0</accession>
<feature type="chain" id="PRO_0000436751" description="KH domain-containing protein HEN4">
    <location>
        <begin position="1"/>
        <end position="857"/>
    </location>
</feature>
<feature type="domain" description="KH 1" evidence="1">
    <location>
        <begin position="46"/>
        <end position="110"/>
    </location>
</feature>
<feature type="domain" description="KH 2" evidence="1">
    <location>
        <begin position="149"/>
        <end position="217"/>
    </location>
</feature>
<feature type="domain" description="KH 3" evidence="1">
    <location>
        <begin position="451"/>
        <end position="521"/>
    </location>
</feature>
<feature type="domain" description="KH 4" evidence="1">
    <location>
        <begin position="541"/>
        <end position="610"/>
    </location>
</feature>
<feature type="domain" description="KH 5" evidence="1">
    <location>
        <begin position="775"/>
        <end position="839"/>
    </location>
</feature>
<feature type="region of interest" description="Disordered" evidence="2">
    <location>
        <begin position="1"/>
        <end position="27"/>
    </location>
</feature>
<feature type="region of interest" description="Disordered" evidence="2">
    <location>
        <begin position="644"/>
        <end position="755"/>
    </location>
</feature>
<feature type="compositionally biased region" description="Basic and acidic residues" evidence="2">
    <location>
        <begin position="1"/>
        <end position="15"/>
    </location>
</feature>
<feature type="compositionally biased region" description="Polar residues" evidence="2">
    <location>
        <begin position="645"/>
        <end position="665"/>
    </location>
</feature>
<feature type="compositionally biased region" description="Polar residues" evidence="2">
    <location>
        <begin position="673"/>
        <end position="688"/>
    </location>
</feature>
<feature type="compositionally biased region" description="Basic and acidic residues" evidence="2">
    <location>
        <begin position="718"/>
        <end position="730"/>
    </location>
</feature>
<feature type="compositionally biased region" description="Low complexity" evidence="2">
    <location>
        <begin position="746"/>
        <end position="755"/>
    </location>
</feature>
<dbReference type="EMBL" id="AB008268">
    <property type="protein sequence ID" value="BAB09870.1"/>
    <property type="status" value="ALT_SEQ"/>
    <property type="molecule type" value="Genomic_DNA"/>
</dbReference>
<dbReference type="EMBL" id="CP002688">
    <property type="protein sequence ID" value="AED97884.1"/>
    <property type="molecule type" value="Genomic_DNA"/>
</dbReference>
<dbReference type="EMBL" id="BT004044">
    <property type="status" value="NOT_ANNOTATED_CDS"/>
    <property type="molecule type" value="mRNA"/>
</dbReference>
<dbReference type="RefSeq" id="NP_201244.2">
    <molecule id="F4KDN0-1"/>
    <property type="nucleotide sequence ID" value="NM_125835.5"/>
</dbReference>
<dbReference type="SMR" id="F4KDN0"/>
<dbReference type="FunCoup" id="F4KDN0">
    <property type="interactions" value="845"/>
</dbReference>
<dbReference type="STRING" id="3702.F4KDN0"/>
<dbReference type="GlyGen" id="F4KDN0">
    <property type="glycosylation" value="1 site, 1 O-linked glycan (1 site)"/>
</dbReference>
<dbReference type="iPTMnet" id="F4KDN0"/>
<dbReference type="PaxDb" id="3702-AT5G64390.3"/>
<dbReference type="ProteomicsDB" id="230273">
    <molecule id="F4KDN0-1"/>
</dbReference>
<dbReference type="EnsemblPlants" id="AT5G64390.1">
    <molecule id="F4KDN0-1"/>
    <property type="protein sequence ID" value="AT5G64390.1"/>
    <property type="gene ID" value="AT5G64390"/>
</dbReference>
<dbReference type="GeneID" id="836560"/>
<dbReference type="Gramene" id="AT5G64390.1">
    <molecule id="F4KDN0-1"/>
    <property type="protein sequence ID" value="AT5G64390.1"/>
    <property type="gene ID" value="AT5G64390"/>
</dbReference>
<dbReference type="KEGG" id="ath:AT5G64390"/>
<dbReference type="Araport" id="AT5G64390"/>
<dbReference type="TAIR" id="AT5G64390">
    <property type="gene designation" value="HEN4"/>
</dbReference>
<dbReference type="eggNOG" id="KOG2190">
    <property type="taxonomic scope" value="Eukaryota"/>
</dbReference>
<dbReference type="InParanoid" id="F4KDN0"/>
<dbReference type="OMA" id="VGHASFR"/>
<dbReference type="PRO" id="PR:F4KDN0"/>
<dbReference type="Proteomes" id="UP000006548">
    <property type="component" value="Chromosome 5"/>
</dbReference>
<dbReference type="ExpressionAtlas" id="F4KDN0">
    <property type="expression patterns" value="baseline and differential"/>
</dbReference>
<dbReference type="GO" id="GO:0016607">
    <property type="term" value="C:nuclear speck"/>
    <property type="evidence" value="ECO:0000314"/>
    <property type="project" value="UniProtKB"/>
</dbReference>
<dbReference type="GO" id="GO:0003723">
    <property type="term" value="F:RNA binding"/>
    <property type="evidence" value="ECO:0007669"/>
    <property type="project" value="UniProtKB-KW"/>
</dbReference>
<dbReference type="GO" id="GO:0030154">
    <property type="term" value="P:cell differentiation"/>
    <property type="evidence" value="ECO:0007669"/>
    <property type="project" value="UniProtKB-KW"/>
</dbReference>
<dbReference type="GO" id="GO:0048497">
    <property type="term" value="P:maintenance of floral organ identity"/>
    <property type="evidence" value="ECO:0000315"/>
    <property type="project" value="UniProtKB"/>
</dbReference>
<dbReference type="GO" id="GO:0006397">
    <property type="term" value="P:mRNA processing"/>
    <property type="evidence" value="ECO:0007669"/>
    <property type="project" value="UniProtKB-KW"/>
</dbReference>
<dbReference type="GO" id="GO:0009911">
    <property type="term" value="P:positive regulation of flower development"/>
    <property type="evidence" value="ECO:0000315"/>
    <property type="project" value="UniProtKB"/>
</dbReference>
<dbReference type="CDD" id="cd22462">
    <property type="entry name" value="KH-I_HEN4_like_rpt5"/>
    <property type="match status" value="1"/>
</dbReference>
<dbReference type="CDD" id="cd22459">
    <property type="entry name" value="KH-I_PEPPER_rpt1_like"/>
    <property type="match status" value="2"/>
</dbReference>
<dbReference type="CDD" id="cd22460">
    <property type="entry name" value="KH-I_PEPPER_rpt2_like"/>
    <property type="match status" value="2"/>
</dbReference>
<dbReference type="FunFam" id="3.30.310.210:FF:000002">
    <property type="entry name" value="KH domain-containing protein"/>
    <property type="match status" value="1"/>
</dbReference>
<dbReference type="Gene3D" id="3.30.310.210">
    <property type="match status" value="1"/>
</dbReference>
<dbReference type="Gene3D" id="3.30.1370.10">
    <property type="entry name" value="K Homology domain, type 1"/>
    <property type="match status" value="3"/>
</dbReference>
<dbReference type="InterPro" id="IPR004087">
    <property type="entry name" value="KH_dom"/>
</dbReference>
<dbReference type="InterPro" id="IPR004088">
    <property type="entry name" value="KH_dom_type_1"/>
</dbReference>
<dbReference type="InterPro" id="IPR036612">
    <property type="entry name" value="KH_dom_type_1_sf"/>
</dbReference>
<dbReference type="PANTHER" id="PTHR10288">
    <property type="entry name" value="KH DOMAIN CONTAINING RNA BINDING PROTEIN"/>
    <property type="match status" value="1"/>
</dbReference>
<dbReference type="Pfam" id="PF00013">
    <property type="entry name" value="KH_1"/>
    <property type="match status" value="5"/>
</dbReference>
<dbReference type="SMART" id="SM00322">
    <property type="entry name" value="KH"/>
    <property type="match status" value="5"/>
</dbReference>
<dbReference type="SUPFAM" id="SSF54791">
    <property type="entry name" value="Eukaryotic type KH-domain (KH-domain type I)"/>
    <property type="match status" value="5"/>
</dbReference>
<dbReference type="PROSITE" id="PS50084">
    <property type="entry name" value="KH_TYPE_1"/>
    <property type="match status" value="5"/>
</dbReference>
<reference key="1">
    <citation type="journal article" date="1997" name="DNA Res.">
        <title>Structural analysis of Arabidopsis thaliana chromosome 5. III. Sequence features of the regions of 1,191,918 bp covered by seventeen physically assigned P1 clones.</title>
        <authorList>
            <person name="Nakamura Y."/>
            <person name="Sato S."/>
            <person name="Kaneko T."/>
            <person name="Kotani H."/>
            <person name="Asamizu E."/>
            <person name="Miyajima N."/>
            <person name="Tabata S."/>
        </authorList>
    </citation>
    <scope>NUCLEOTIDE SEQUENCE [LARGE SCALE GENOMIC DNA]</scope>
    <source>
        <strain>cv. Columbia</strain>
    </source>
</reference>
<reference key="2">
    <citation type="journal article" date="2017" name="Plant J.">
        <title>Araport11: a complete reannotation of the Arabidopsis thaliana reference genome.</title>
        <authorList>
            <person name="Cheng C.Y."/>
            <person name="Krishnakumar V."/>
            <person name="Chan A.P."/>
            <person name="Thibaud-Nissen F."/>
            <person name="Schobel S."/>
            <person name="Town C.D."/>
        </authorList>
    </citation>
    <scope>GENOME REANNOTATION</scope>
    <source>
        <strain>cv. Columbia</strain>
    </source>
</reference>
<reference key="3">
    <citation type="journal article" date="2003" name="Science">
        <title>Empirical analysis of transcriptional activity in the Arabidopsis genome.</title>
        <authorList>
            <person name="Yamada K."/>
            <person name="Lim J."/>
            <person name="Dale J.M."/>
            <person name="Chen H."/>
            <person name="Shinn P."/>
            <person name="Palm C.J."/>
            <person name="Southwick A.M."/>
            <person name="Wu H.C."/>
            <person name="Kim C.J."/>
            <person name="Nguyen M."/>
            <person name="Pham P.K."/>
            <person name="Cheuk R.F."/>
            <person name="Karlin-Newmann G."/>
            <person name="Liu S.X."/>
            <person name="Lam B."/>
            <person name="Sakano H."/>
            <person name="Wu T."/>
            <person name="Yu G."/>
            <person name="Miranda M."/>
            <person name="Quach H.L."/>
            <person name="Tripp M."/>
            <person name="Chang C.H."/>
            <person name="Lee J.M."/>
            <person name="Toriumi M.J."/>
            <person name="Chan M.M."/>
            <person name="Tang C.C."/>
            <person name="Onodera C.S."/>
            <person name="Deng J.M."/>
            <person name="Akiyama K."/>
            <person name="Ansari Y."/>
            <person name="Arakawa T."/>
            <person name="Banh J."/>
            <person name="Banno F."/>
            <person name="Bowser L."/>
            <person name="Brooks S.Y."/>
            <person name="Carninci P."/>
            <person name="Chao Q."/>
            <person name="Choy N."/>
            <person name="Enju A."/>
            <person name="Goldsmith A.D."/>
            <person name="Gurjal M."/>
            <person name="Hansen N.F."/>
            <person name="Hayashizaki Y."/>
            <person name="Johnson-Hopson C."/>
            <person name="Hsuan V.W."/>
            <person name="Iida K."/>
            <person name="Karnes M."/>
            <person name="Khan S."/>
            <person name="Koesema E."/>
            <person name="Ishida J."/>
            <person name="Jiang P.X."/>
            <person name="Jones T."/>
            <person name="Kawai J."/>
            <person name="Kamiya A."/>
            <person name="Meyers C."/>
            <person name="Nakajima M."/>
            <person name="Narusaka M."/>
            <person name="Seki M."/>
            <person name="Sakurai T."/>
            <person name="Satou M."/>
            <person name="Tamse R."/>
            <person name="Vaysberg M."/>
            <person name="Wallender E.K."/>
            <person name="Wong C."/>
            <person name="Yamamura Y."/>
            <person name="Yuan S."/>
            <person name="Shinozaki K."/>
            <person name="Davis R.W."/>
            <person name="Theologis A."/>
            <person name="Ecker J.R."/>
        </authorList>
    </citation>
    <scope>NUCLEOTIDE SEQUENCE [LARGE SCALE MRNA]</scope>
    <source>
        <strain>cv. Columbia</strain>
    </source>
</reference>
<reference key="4">
    <citation type="journal article" date="2004" name="Proc. Natl. Acad. Sci. U.S.A.">
        <title>Regulation of flowering time in Arabidopsis by K homology domain proteins.</title>
        <authorList>
            <person name="Mockler T.C."/>
            <person name="Yu X."/>
            <person name="Shalitin D."/>
            <person name="Parikh D."/>
            <person name="Michael T.P."/>
            <person name="Liou J."/>
            <person name="Huang J."/>
            <person name="Smith Z."/>
            <person name="Alonso J.M."/>
            <person name="Ecker J.R."/>
            <person name="Chory J."/>
            <person name="Lin C."/>
        </authorList>
    </citation>
    <scope>FUNCTION</scope>
    <scope>INTERACTION WITH HUA1</scope>
    <scope>SUBCELLULAR LOCATION</scope>
    <scope>DEVELOPMENTAL STAGE</scope>
    <scope>DISRUPTION PHENOTYPE</scope>
    <source>
        <strain>cv. Landsberg erecta</strain>
    </source>
</reference>
<reference key="5">
    <citation type="journal article" date="2015" name="PLoS Genet.">
        <title>K-homology nuclear ribonucleoproteins regulate floral organ identity and determinacy in arabidopsis.</title>
        <authorList>
            <person name="Rodriguez-Cazorla E."/>
            <person name="Ripoll J.J."/>
            <person name="Andujar A."/>
            <person name="Bailey L.J."/>
            <person name="Martinez-Laborda A."/>
            <person name="Yanofsky M.F."/>
            <person name="Vera A."/>
        </authorList>
    </citation>
    <scope>INTERACTION WITH FLK AND PEP</scope>
</reference>
<name>HEN4_ARATH</name>
<sequence>MERNSVKFHAEKRSGAFDPGSGFGSSKRVKTHHTQLLSALVVPVGHAAFRLLCPLSHVGAVIGKSGNVIKQLQQSTGAKIRVEEPPSGSPDRVITIIAQADSKSRVKLGANNNGNAEGEKKEEEVEVSKAQGALIKVFELLAAEADSDTVVCRLLTESSHAGAVIGKGGQMVGSIRKETGCKISIRIENLPICADTDDEMVEVEGNAIAVKKALVSISRCLQNCQSIDKVRMVGNRPLEKEFQASLHRPIETIIQESLPRSVEVNPYDYRLRNDEIFPRGTVARANDVIPHDTLHLRRIEAVPQGALRMHIEADRQDVLRRHVEADRQDALRRRIDVVPQETLYMPSDVLRGDCFRQHRERDDSHDSLHRPFEMVPRDAMGMPFESFPRDAYGRPIETMTQETLRGQSADYLAHRYSTLDTHPHSFTTSASMANTATMKPPPSEVEVGNQDVVFKILCSTENAGGVIGTGGKVVRMLHSETGAFINVGNTLDDCEERLIAVTASENPECQSSPAQKAIMLIFSRLFELATNKILDNGPRSSITARLVVPTSQIGCVLGKGGVIVSEMRKTTGAAIQILKVEQNPKCISENDQVVQITGEFPNVREAIFHITSRLRDSVFSNSMKNSLAKSSSALTTERFYDRQSDNPLSIGSHQSVSNPATNSSSLHRRSEDSFLSGSHSSVNYSRSVGTDPYIRPEDPFPDRFNPSAGYSHNFGRRFTMDHSDNSHHLTEAPSRLWASPPPAAPRGLSDASGGLSSARAGHVLGSGHKSAIVTNTTVEIRVPANAMSFVYGEQGYNLEQLRQISGARVIIHEPPLGTSDRIIVISGTPDQTQAAQNLLHAFILTGETSLSKKYNLN</sequence>
<gene>
    <name evidence="5" type="primary">HEN4</name>
    <name evidence="7" type="ordered locus">At5g64390</name>
</gene>
<keyword id="KW-0025">Alternative splicing</keyword>
<keyword id="KW-0217">Developmental protein</keyword>
<keyword id="KW-0221">Differentiation</keyword>
<keyword id="KW-0287">Flowering</keyword>
<keyword id="KW-0507">mRNA processing</keyword>
<keyword id="KW-0539">Nucleus</keyword>
<keyword id="KW-1185">Reference proteome</keyword>
<keyword id="KW-0677">Repeat</keyword>
<keyword id="KW-0694">RNA-binding</keyword>
<organism>
    <name type="scientific">Arabidopsis thaliana</name>
    <name type="common">Mouse-ear cress</name>
    <dbReference type="NCBI Taxonomy" id="3702"/>
    <lineage>
        <taxon>Eukaryota</taxon>
        <taxon>Viridiplantae</taxon>
        <taxon>Streptophyta</taxon>
        <taxon>Embryophyta</taxon>
        <taxon>Tracheophyta</taxon>
        <taxon>Spermatophyta</taxon>
        <taxon>Magnoliopsida</taxon>
        <taxon>eudicotyledons</taxon>
        <taxon>Gunneridae</taxon>
        <taxon>Pentapetalae</taxon>
        <taxon>rosids</taxon>
        <taxon>malvids</taxon>
        <taxon>Brassicales</taxon>
        <taxon>Brassicaceae</taxon>
        <taxon>Camelineae</taxon>
        <taxon>Arabidopsis</taxon>
    </lineage>
</organism>
<protein>
    <recommendedName>
        <fullName evidence="6">KH domain-containing protein HEN4</fullName>
    </recommendedName>
    <alternativeName>
        <fullName evidence="5">Protein HUA ENHANCER 4</fullName>
    </alternativeName>
</protein>
<evidence type="ECO:0000255" key="1">
    <source>
        <dbReference type="PROSITE-ProRule" id="PRU00117"/>
    </source>
</evidence>
<evidence type="ECO:0000256" key="2">
    <source>
        <dbReference type="SAM" id="MobiDB-lite"/>
    </source>
</evidence>
<evidence type="ECO:0000269" key="3">
    <source>
    </source>
</evidence>
<evidence type="ECO:0000269" key="4">
    <source>
    </source>
</evidence>
<evidence type="ECO:0000303" key="5">
    <source>
    </source>
</evidence>
<evidence type="ECO:0000305" key="6"/>
<evidence type="ECO:0000312" key="7">
    <source>
        <dbReference type="Araport" id="AT5G64390"/>
    </source>
</evidence>
<comment type="function">
    <text evidence="3">Functions in floral reproductive organ identity in the third whorl and floral determinacy specification by specifically promoting the processing of AGAMOUS (AG) pre-mRNA. Functions in association with HUA1 and HUA2.</text>
</comment>
<comment type="subunit">
    <text evidence="3 4">Interacts with HUA1 (PubMed:15310842). Interacts with FLK and PEP (PubMed:25658099).</text>
</comment>
<comment type="subcellular location">
    <subcellularLocation>
        <location evidence="3">Nucleus speckle</location>
    </subcellularLocation>
</comment>
<comment type="alternative products">
    <event type="alternative splicing"/>
    <isoform>
        <id>F4KDN0-1</id>
        <name>1</name>
        <sequence type="displayed"/>
    </isoform>
    <text evidence="6">A number of isoforms are produced. According to EST sequences.</text>
</comment>
<comment type="developmental stage">
    <text evidence="3">Expressed in inflorescence meristem during flower development at least until stage 6 of development.</text>
</comment>
<comment type="disruption phenotype">
    <text evidence="3">Floral organ defects such as reproductive-to-perianth organ transformation and loss of floral determinacy.</text>
</comment>
<comment type="sequence caution" evidence="6">
    <conflict type="erroneous gene model prediction">
        <sequence resource="EMBL-CDS" id="BAB09870"/>
    </conflict>
</comment>
<comment type="sequence caution" evidence="6">
    <conflict type="frameshift">
        <sequence resource="EMBL" id="BT004044"/>
    </conflict>
</comment>
<proteinExistence type="evidence at protein level"/>